<dbReference type="EMBL" id="CP000612">
    <property type="protein sequence ID" value="ABO48761.1"/>
    <property type="molecule type" value="Genomic_DNA"/>
</dbReference>
<dbReference type="RefSeq" id="WP_011876602.1">
    <property type="nucleotide sequence ID" value="NC_009253.1"/>
</dbReference>
<dbReference type="SMR" id="A4J108"/>
<dbReference type="STRING" id="349161.Dred_0212"/>
<dbReference type="KEGG" id="drm:Dred_0212"/>
<dbReference type="eggNOG" id="COG0480">
    <property type="taxonomic scope" value="Bacteria"/>
</dbReference>
<dbReference type="HOGENOM" id="CLU_002794_4_1_9"/>
<dbReference type="OrthoDB" id="9804431at2"/>
<dbReference type="Proteomes" id="UP000001556">
    <property type="component" value="Chromosome"/>
</dbReference>
<dbReference type="GO" id="GO:0005737">
    <property type="term" value="C:cytoplasm"/>
    <property type="evidence" value="ECO:0007669"/>
    <property type="project" value="UniProtKB-SubCell"/>
</dbReference>
<dbReference type="GO" id="GO:0005525">
    <property type="term" value="F:GTP binding"/>
    <property type="evidence" value="ECO:0007669"/>
    <property type="project" value="UniProtKB-UniRule"/>
</dbReference>
<dbReference type="GO" id="GO:0003924">
    <property type="term" value="F:GTPase activity"/>
    <property type="evidence" value="ECO:0007669"/>
    <property type="project" value="InterPro"/>
</dbReference>
<dbReference type="GO" id="GO:0003746">
    <property type="term" value="F:translation elongation factor activity"/>
    <property type="evidence" value="ECO:0007669"/>
    <property type="project" value="UniProtKB-UniRule"/>
</dbReference>
<dbReference type="GO" id="GO:0032790">
    <property type="term" value="P:ribosome disassembly"/>
    <property type="evidence" value="ECO:0007669"/>
    <property type="project" value="TreeGrafter"/>
</dbReference>
<dbReference type="CDD" id="cd01886">
    <property type="entry name" value="EF-G"/>
    <property type="match status" value="1"/>
</dbReference>
<dbReference type="CDD" id="cd16262">
    <property type="entry name" value="EFG_III"/>
    <property type="match status" value="1"/>
</dbReference>
<dbReference type="CDD" id="cd01434">
    <property type="entry name" value="EFG_mtEFG1_IV"/>
    <property type="match status" value="1"/>
</dbReference>
<dbReference type="CDD" id="cd03713">
    <property type="entry name" value="EFG_mtEFG_C"/>
    <property type="match status" value="1"/>
</dbReference>
<dbReference type="CDD" id="cd04088">
    <property type="entry name" value="EFG_mtEFG_II"/>
    <property type="match status" value="1"/>
</dbReference>
<dbReference type="FunFam" id="2.40.30.10:FF:000006">
    <property type="entry name" value="Elongation factor G"/>
    <property type="match status" value="1"/>
</dbReference>
<dbReference type="FunFam" id="3.30.230.10:FF:000003">
    <property type="entry name" value="Elongation factor G"/>
    <property type="match status" value="1"/>
</dbReference>
<dbReference type="FunFam" id="3.30.70.240:FF:000001">
    <property type="entry name" value="Elongation factor G"/>
    <property type="match status" value="1"/>
</dbReference>
<dbReference type="FunFam" id="3.30.70.870:FF:000001">
    <property type="entry name" value="Elongation factor G"/>
    <property type="match status" value="1"/>
</dbReference>
<dbReference type="FunFam" id="3.40.50.300:FF:000029">
    <property type="entry name" value="Elongation factor G"/>
    <property type="match status" value="1"/>
</dbReference>
<dbReference type="Gene3D" id="3.30.230.10">
    <property type="match status" value="1"/>
</dbReference>
<dbReference type="Gene3D" id="3.30.70.240">
    <property type="match status" value="1"/>
</dbReference>
<dbReference type="Gene3D" id="3.30.70.870">
    <property type="entry name" value="Elongation Factor G (Translational Gtpase), domain 3"/>
    <property type="match status" value="1"/>
</dbReference>
<dbReference type="Gene3D" id="3.40.50.300">
    <property type="entry name" value="P-loop containing nucleotide triphosphate hydrolases"/>
    <property type="match status" value="1"/>
</dbReference>
<dbReference type="Gene3D" id="2.40.30.10">
    <property type="entry name" value="Translation factors"/>
    <property type="match status" value="1"/>
</dbReference>
<dbReference type="HAMAP" id="MF_00054_B">
    <property type="entry name" value="EF_G_EF_2_B"/>
    <property type="match status" value="1"/>
</dbReference>
<dbReference type="InterPro" id="IPR041095">
    <property type="entry name" value="EFG_II"/>
</dbReference>
<dbReference type="InterPro" id="IPR009022">
    <property type="entry name" value="EFG_III"/>
</dbReference>
<dbReference type="InterPro" id="IPR035647">
    <property type="entry name" value="EFG_III/V"/>
</dbReference>
<dbReference type="InterPro" id="IPR047872">
    <property type="entry name" value="EFG_IV"/>
</dbReference>
<dbReference type="InterPro" id="IPR035649">
    <property type="entry name" value="EFG_V"/>
</dbReference>
<dbReference type="InterPro" id="IPR000640">
    <property type="entry name" value="EFG_V-like"/>
</dbReference>
<dbReference type="InterPro" id="IPR004161">
    <property type="entry name" value="EFTu-like_2"/>
</dbReference>
<dbReference type="InterPro" id="IPR031157">
    <property type="entry name" value="G_TR_CS"/>
</dbReference>
<dbReference type="InterPro" id="IPR027417">
    <property type="entry name" value="P-loop_NTPase"/>
</dbReference>
<dbReference type="InterPro" id="IPR020568">
    <property type="entry name" value="Ribosomal_Su5_D2-typ_SF"/>
</dbReference>
<dbReference type="InterPro" id="IPR014721">
    <property type="entry name" value="Ribsml_uS5_D2-typ_fold_subgr"/>
</dbReference>
<dbReference type="InterPro" id="IPR005225">
    <property type="entry name" value="Small_GTP-bd"/>
</dbReference>
<dbReference type="InterPro" id="IPR000795">
    <property type="entry name" value="T_Tr_GTP-bd_dom"/>
</dbReference>
<dbReference type="InterPro" id="IPR009000">
    <property type="entry name" value="Transl_B-barrel_sf"/>
</dbReference>
<dbReference type="InterPro" id="IPR004540">
    <property type="entry name" value="Transl_elong_EFG/EF2"/>
</dbReference>
<dbReference type="InterPro" id="IPR005517">
    <property type="entry name" value="Transl_elong_EFG/EF2_IV"/>
</dbReference>
<dbReference type="NCBIfam" id="TIGR00484">
    <property type="entry name" value="EF-G"/>
    <property type="match status" value="1"/>
</dbReference>
<dbReference type="NCBIfam" id="NF009379">
    <property type="entry name" value="PRK12740.1-3"/>
    <property type="match status" value="1"/>
</dbReference>
<dbReference type="NCBIfam" id="NF009381">
    <property type="entry name" value="PRK12740.1-5"/>
    <property type="match status" value="1"/>
</dbReference>
<dbReference type="NCBIfam" id="TIGR00231">
    <property type="entry name" value="small_GTP"/>
    <property type="match status" value="1"/>
</dbReference>
<dbReference type="PANTHER" id="PTHR43261:SF1">
    <property type="entry name" value="RIBOSOME-RELEASING FACTOR 2, MITOCHONDRIAL"/>
    <property type="match status" value="1"/>
</dbReference>
<dbReference type="PANTHER" id="PTHR43261">
    <property type="entry name" value="TRANSLATION ELONGATION FACTOR G-RELATED"/>
    <property type="match status" value="1"/>
</dbReference>
<dbReference type="Pfam" id="PF00679">
    <property type="entry name" value="EFG_C"/>
    <property type="match status" value="1"/>
</dbReference>
<dbReference type="Pfam" id="PF14492">
    <property type="entry name" value="EFG_III"/>
    <property type="match status" value="1"/>
</dbReference>
<dbReference type="Pfam" id="PF03764">
    <property type="entry name" value="EFG_IV"/>
    <property type="match status" value="1"/>
</dbReference>
<dbReference type="Pfam" id="PF00009">
    <property type="entry name" value="GTP_EFTU"/>
    <property type="match status" value="1"/>
</dbReference>
<dbReference type="Pfam" id="PF03144">
    <property type="entry name" value="GTP_EFTU_D2"/>
    <property type="match status" value="1"/>
</dbReference>
<dbReference type="PRINTS" id="PR00315">
    <property type="entry name" value="ELONGATNFCT"/>
</dbReference>
<dbReference type="SMART" id="SM00838">
    <property type="entry name" value="EFG_C"/>
    <property type="match status" value="1"/>
</dbReference>
<dbReference type="SMART" id="SM00889">
    <property type="entry name" value="EFG_IV"/>
    <property type="match status" value="1"/>
</dbReference>
<dbReference type="SUPFAM" id="SSF54980">
    <property type="entry name" value="EF-G C-terminal domain-like"/>
    <property type="match status" value="2"/>
</dbReference>
<dbReference type="SUPFAM" id="SSF52540">
    <property type="entry name" value="P-loop containing nucleoside triphosphate hydrolases"/>
    <property type="match status" value="1"/>
</dbReference>
<dbReference type="SUPFAM" id="SSF54211">
    <property type="entry name" value="Ribosomal protein S5 domain 2-like"/>
    <property type="match status" value="1"/>
</dbReference>
<dbReference type="SUPFAM" id="SSF50447">
    <property type="entry name" value="Translation proteins"/>
    <property type="match status" value="1"/>
</dbReference>
<dbReference type="PROSITE" id="PS00301">
    <property type="entry name" value="G_TR_1"/>
    <property type="match status" value="1"/>
</dbReference>
<dbReference type="PROSITE" id="PS51722">
    <property type="entry name" value="G_TR_2"/>
    <property type="match status" value="1"/>
</dbReference>
<accession>A4J108</accession>
<keyword id="KW-0963">Cytoplasm</keyword>
<keyword id="KW-0251">Elongation factor</keyword>
<keyword id="KW-0342">GTP-binding</keyword>
<keyword id="KW-0547">Nucleotide-binding</keyword>
<keyword id="KW-0648">Protein biosynthesis</keyword>
<keyword id="KW-1185">Reference proteome</keyword>
<protein>
    <recommendedName>
        <fullName evidence="1">Elongation factor G</fullName>
        <shortName evidence="1">EF-G</shortName>
    </recommendedName>
</protein>
<reference key="1">
    <citation type="submission" date="2007-03" db="EMBL/GenBank/DDBJ databases">
        <title>Complete sequence of Desulfotomaculum reducens MI-1.</title>
        <authorList>
            <consortium name="US DOE Joint Genome Institute"/>
            <person name="Copeland A."/>
            <person name="Lucas S."/>
            <person name="Lapidus A."/>
            <person name="Barry K."/>
            <person name="Detter J.C."/>
            <person name="Glavina del Rio T."/>
            <person name="Hammon N."/>
            <person name="Israni S."/>
            <person name="Dalin E."/>
            <person name="Tice H."/>
            <person name="Pitluck S."/>
            <person name="Sims D."/>
            <person name="Brettin T."/>
            <person name="Bruce D."/>
            <person name="Han C."/>
            <person name="Tapia R."/>
            <person name="Schmutz J."/>
            <person name="Larimer F."/>
            <person name="Land M."/>
            <person name="Hauser L."/>
            <person name="Kyrpides N."/>
            <person name="Kim E."/>
            <person name="Tebo B.M."/>
            <person name="Richardson P."/>
        </authorList>
    </citation>
    <scope>NUCLEOTIDE SEQUENCE [LARGE SCALE GENOMIC DNA]</scope>
    <source>
        <strain>ATCC BAA-1160 / DSM 100696 / MI-1</strain>
    </source>
</reference>
<sequence length="692" mass="76379">MARQFPLERTRNIGIMAHIDAGKTTTTERILFYTGRVHKIGEVHDGAATMDWMVQEQERGITITSAATTAQWNGHRVNIIDTPGHVDFTVEVERSLRVLDGAVAVFCSVGGVEPQSETVWRQADKYGVPRLAYINKMDRVGADFFNGMDMIKNRLGANPVAIQLPIGSEDRFKGIVDLVTKKAIVYIDDLGTNSETTDIPADMVDQVEEYREKLLEAVAESDEELMMKYLEGEELTEEEIKVAIRKATLAVKITPVICGSSFKNKGVQSLLDAIVDYLPAPTDVPPIQGVNPDTGTEDQRISSDNEPFAALAFKIMTDPYVGKLSYFRVYSGTLKSGSYVLNSTKGKKERVGRILQMHANHREEIPEVYAGDIAAAVGLKDTTTGDTLCDEKSLIILESMEFPDPVIHVAIEPKTKADQDKMGVALSKLSEEDPTFKVRTDEETGQTIIAGMGELHLEIIVDRLLREFKVQANVGRPQVAYKETIRKAVKAEGKFVRQSGGKGQYGHVWIELEPLEAGGPGYEFVNKIVGGVVPREYIAPVDNGIKEAMENGILAGYQMVDIKATLYDGSYHEVDSSEMAFKIAGSMAFKNGAQKANPVLLEPIFKVEVTVPEEYMGDVIGDLNSRRGRIEEMGQRGNARIVSAFVPLAEMFGYATDLRSKTQGRGTYSMQHDHYEEVPKNIAEGIIAKRKG</sequence>
<evidence type="ECO:0000255" key="1">
    <source>
        <dbReference type="HAMAP-Rule" id="MF_00054"/>
    </source>
</evidence>
<comment type="function">
    <text evidence="1">Catalyzes the GTP-dependent ribosomal translocation step during translation elongation. During this step, the ribosome changes from the pre-translocational (PRE) to the post-translocational (POST) state as the newly formed A-site-bound peptidyl-tRNA and P-site-bound deacylated tRNA move to the P and E sites, respectively. Catalyzes the coordinated movement of the two tRNA molecules, the mRNA and conformational changes in the ribosome.</text>
</comment>
<comment type="subcellular location">
    <subcellularLocation>
        <location evidence="1">Cytoplasm</location>
    </subcellularLocation>
</comment>
<comment type="similarity">
    <text evidence="1">Belongs to the TRAFAC class translation factor GTPase superfamily. Classic translation factor GTPase family. EF-G/EF-2 subfamily.</text>
</comment>
<feature type="chain" id="PRO_1000071144" description="Elongation factor G">
    <location>
        <begin position="1"/>
        <end position="692"/>
    </location>
</feature>
<feature type="domain" description="tr-type G">
    <location>
        <begin position="8"/>
        <end position="282"/>
    </location>
</feature>
<feature type="binding site" evidence="1">
    <location>
        <begin position="17"/>
        <end position="24"/>
    </location>
    <ligand>
        <name>GTP</name>
        <dbReference type="ChEBI" id="CHEBI:37565"/>
    </ligand>
</feature>
<feature type="binding site" evidence="1">
    <location>
        <begin position="81"/>
        <end position="85"/>
    </location>
    <ligand>
        <name>GTP</name>
        <dbReference type="ChEBI" id="CHEBI:37565"/>
    </ligand>
</feature>
<feature type="binding site" evidence="1">
    <location>
        <begin position="135"/>
        <end position="138"/>
    </location>
    <ligand>
        <name>GTP</name>
        <dbReference type="ChEBI" id="CHEBI:37565"/>
    </ligand>
</feature>
<name>EFG_DESRM</name>
<organism>
    <name type="scientific">Desulforamulus reducens (strain ATCC BAA-1160 / DSM 100696 / MI-1)</name>
    <name type="common">Desulfotomaculum reducens</name>
    <dbReference type="NCBI Taxonomy" id="349161"/>
    <lineage>
        <taxon>Bacteria</taxon>
        <taxon>Bacillati</taxon>
        <taxon>Bacillota</taxon>
        <taxon>Clostridia</taxon>
        <taxon>Eubacteriales</taxon>
        <taxon>Peptococcaceae</taxon>
        <taxon>Desulforamulus</taxon>
    </lineage>
</organism>
<proteinExistence type="inferred from homology"/>
<gene>
    <name evidence="1" type="primary">fusA</name>
    <name type="ordered locus">Dred_0212</name>
</gene>